<keyword id="KW-0963">Cytoplasm</keyword>
<keyword id="KW-0206">Cytoskeleton</keyword>
<keyword id="KW-0217">Developmental protein</keyword>
<keyword id="KW-0221">Differentiation</keyword>
<keyword id="KW-0524">Neurogenesis</keyword>
<keyword id="KW-1185">Reference proteome</keyword>
<name>KBP_XENTR</name>
<proteinExistence type="evidence at transcript level"/>
<protein>
    <recommendedName>
        <fullName>KIF-binding protein</fullName>
    </recommendedName>
    <alternativeName>
        <fullName evidence="1">KIF1-binding protein</fullName>
    </alternativeName>
</protein>
<reference key="1">
    <citation type="submission" date="2006-08" db="EMBL/GenBank/DDBJ databases">
        <authorList>
            <consortium name="NIH - Xenopus Gene Collection (XGC) project"/>
        </authorList>
    </citation>
    <scope>NUCLEOTIDE SEQUENCE [LARGE SCALE MRNA]</scope>
    <source>
        <tissue>Testis</tissue>
    </source>
</reference>
<evidence type="ECO:0000250" key="1">
    <source>
        <dbReference type="UniProtKB" id="Q96EK5"/>
    </source>
</evidence>
<evidence type="ECO:0000256" key="2">
    <source>
        <dbReference type="SAM" id="MobiDB-lite"/>
    </source>
</evidence>
<evidence type="ECO:0000305" key="3"/>
<comment type="function">
    <text evidence="1">Activator of KIF1B plus-end-directed microtubule motor activity. Required for organization of axonal microtubules, and axonal outgrowth and maintenance during peripheral and central nervous system development.</text>
</comment>
<comment type="subcellular location">
    <subcellularLocation>
        <location evidence="1">Cytoplasm</location>
        <location evidence="1">Cytoskeleton</location>
    </subcellularLocation>
</comment>
<comment type="similarity">
    <text evidence="3">Belongs to the KIF-binding protein family.</text>
</comment>
<sequence>MADDWRQVCETYRRAITLSDVESKNDPENEPYRSKYRARELLREVRVLLCPEEEEESEAEGKEERRDGPESGGRRGESGELLAARLAVVEFRLGLNHTETEEMSAGEEHLVKSGRIMERFRLSEEGVSVYIQAQNNLGILWADRGEIRVAQRYLESAESLYYQYMKEIGKPAIDPDEHFFSEEQKLTEQERTKRFERVYTHTLYYLAQVYKHLKQDEKAAQYCHTTLQRQLEYDSYNPVEWAINAATLSQYYVTKQCYMESRHCLAAANVIFSKAEQIPSAEAAKENEAEQERLDLLRQKKAEIARCWVKYCLNLLQDARKKLEDNIGELDVDIQEELKAQRQKEEDEKEKDRKKAILFGSSDIYDSVQAAEEKVECSHPLDFKEAREVFLVGQNYINESKEYFQLDGHVTDHIEIIQDHSSLFKLLAFFEEDYERRCKMHKRRIDMLEPLCKELNPQYYLLICRQLQFELADTSYEMMDLKVAIGNKLDEMDTHTIKKINSLAQTAIKYYEMFLDSLRSPDQKFPEKLEEDVLRPAMVAKFRIARLYGKLISTDGKIQLENIQKSLNNYKYIVDYCEINKEAIKCIETELELSKEMVALLPTRMERLRIQLASFS</sequence>
<feature type="chain" id="PRO_0000334519" description="KIF-binding protein">
    <location>
        <begin position="1"/>
        <end position="616"/>
    </location>
</feature>
<feature type="region of interest" description="Disordered" evidence="2">
    <location>
        <begin position="52"/>
        <end position="78"/>
    </location>
</feature>
<feature type="compositionally biased region" description="Basic and acidic residues" evidence="2">
    <location>
        <begin position="59"/>
        <end position="78"/>
    </location>
</feature>
<gene>
    <name evidence="1" type="primary">Kifbp</name>
    <name evidence="1" type="synonym">kbp</name>
    <name type="synonym">Kif1bp</name>
</gene>
<accession>Q0IIZ5</accession>
<organism>
    <name type="scientific">Xenopus tropicalis</name>
    <name type="common">Western clawed frog</name>
    <name type="synonym">Silurana tropicalis</name>
    <dbReference type="NCBI Taxonomy" id="8364"/>
    <lineage>
        <taxon>Eukaryota</taxon>
        <taxon>Metazoa</taxon>
        <taxon>Chordata</taxon>
        <taxon>Craniata</taxon>
        <taxon>Vertebrata</taxon>
        <taxon>Euteleostomi</taxon>
        <taxon>Amphibia</taxon>
        <taxon>Batrachia</taxon>
        <taxon>Anura</taxon>
        <taxon>Pipoidea</taxon>
        <taxon>Pipidae</taxon>
        <taxon>Xenopodinae</taxon>
        <taxon>Xenopus</taxon>
        <taxon>Silurana</taxon>
    </lineage>
</organism>
<dbReference type="EMBL" id="BC121345">
    <property type="protein sequence ID" value="AAI21346.1"/>
    <property type="molecule type" value="mRNA"/>
</dbReference>
<dbReference type="RefSeq" id="NP_001072796.1">
    <property type="nucleotide sequence ID" value="NM_001079328.1"/>
</dbReference>
<dbReference type="SMR" id="Q0IIZ5"/>
<dbReference type="FunCoup" id="Q0IIZ5">
    <property type="interactions" value="2065"/>
</dbReference>
<dbReference type="STRING" id="8364.ENSXETP00000004639"/>
<dbReference type="PaxDb" id="8364-ENSXETP00000019414"/>
<dbReference type="DNASU" id="780257"/>
<dbReference type="GeneID" id="780257"/>
<dbReference type="KEGG" id="xtr:780257"/>
<dbReference type="AGR" id="Xenbase:XB-GENE-5934501"/>
<dbReference type="CTD" id="26128"/>
<dbReference type="Xenbase" id="XB-GENE-5934501">
    <property type="gene designation" value="kifbp"/>
</dbReference>
<dbReference type="eggNOG" id="ENOG502QPZT">
    <property type="taxonomic scope" value="Eukaryota"/>
</dbReference>
<dbReference type="InParanoid" id="Q0IIZ5"/>
<dbReference type="OMA" id="ICRECWY"/>
<dbReference type="OrthoDB" id="409897at2759"/>
<dbReference type="PhylomeDB" id="Q0IIZ5"/>
<dbReference type="TreeFam" id="TF324211"/>
<dbReference type="Proteomes" id="UP000008143">
    <property type="component" value="Chromosome 7"/>
</dbReference>
<dbReference type="Bgee" id="ENSXETG00000008834">
    <property type="expression patterns" value="Expressed in brain and 12 other cell types or tissues"/>
</dbReference>
<dbReference type="GO" id="GO:0005856">
    <property type="term" value="C:cytoskeleton"/>
    <property type="evidence" value="ECO:0007669"/>
    <property type="project" value="UniProtKB-SubCell"/>
</dbReference>
<dbReference type="GO" id="GO:0005739">
    <property type="term" value="C:mitochondrion"/>
    <property type="evidence" value="ECO:0000250"/>
    <property type="project" value="UniProtKB"/>
</dbReference>
<dbReference type="GO" id="GO:0030154">
    <property type="term" value="P:cell differentiation"/>
    <property type="evidence" value="ECO:0007669"/>
    <property type="project" value="UniProtKB-KW"/>
</dbReference>
<dbReference type="GO" id="GO:0047497">
    <property type="term" value="P:mitochondrion transport along microtubule"/>
    <property type="evidence" value="ECO:0000250"/>
    <property type="project" value="UniProtKB"/>
</dbReference>
<dbReference type="GO" id="GO:0007399">
    <property type="term" value="P:nervous system development"/>
    <property type="evidence" value="ECO:0007669"/>
    <property type="project" value="UniProtKB-KW"/>
</dbReference>
<dbReference type="Gene3D" id="1.25.40.10">
    <property type="entry name" value="Tetratricopeptide repeat domain"/>
    <property type="match status" value="1"/>
</dbReference>
<dbReference type="InterPro" id="IPR022083">
    <property type="entry name" value="KBP"/>
</dbReference>
<dbReference type="InterPro" id="IPR011990">
    <property type="entry name" value="TPR-like_helical_dom_sf"/>
</dbReference>
<dbReference type="PANTHER" id="PTHR46321:SF1">
    <property type="entry name" value="KIF-BINDING PROTEIN"/>
    <property type="match status" value="1"/>
</dbReference>
<dbReference type="PANTHER" id="PTHR46321">
    <property type="entry name" value="KIF1-BINDING PROTEIN"/>
    <property type="match status" value="1"/>
</dbReference>
<dbReference type="Pfam" id="PF12309">
    <property type="entry name" value="KBP_C"/>
    <property type="match status" value="1"/>
</dbReference>
<dbReference type="SUPFAM" id="SSF48452">
    <property type="entry name" value="TPR-like"/>
    <property type="match status" value="1"/>
</dbReference>